<organism>
    <name type="scientific">Vulpes vulpes</name>
    <name type="common">Red fox</name>
    <dbReference type="NCBI Taxonomy" id="9627"/>
    <lineage>
        <taxon>Eukaryota</taxon>
        <taxon>Metazoa</taxon>
        <taxon>Chordata</taxon>
        <taxon>Craniata</taxon>
        <taxon>Vertebrata</taxon>
        <taxon>Euteleostomi</taxon>
        <taxon>Mammalia</taxon>
        <taxon>Eutheria</taxon>
        <taxon>Laurasiatheria</taxon>
        <taxon>Carnivora</taxon>
        <taxon>Caniformia</taxon>
        <taxon>Canidae</taxon>
        <taxon>Vulpes</taxon>
    </lineage>
</organism>
<sequence>MEDAGTPCAPPPPAGSQTGAPPANLSSAPHNCSAEGYIYQDSIALPWKVLLAILLALLTLATTLSNAFVIATVYRTRKLHTPANYLIASLAVTDLLVSILVMPISTMYAVTGRWTLGQVVCDLWLSSDITCCTASILHLCVIALDRYWAITDAVEYSAKRTPKRAAVMIALVWVFSISISLPPFFWRQAKAEEEVSDCVVNTDHILYTVYSTVGAFYFPTLLLIALYGRIYVEARSRILKQTPNRTGKRLTRAQLITDSPGSTSSVTSVNSRAPDVPSESGSPVYVNQVKVRVSDALLEKKKLMAARERKATKTLGIILGAFIVCWLPFFIISLVMPICKDACWFHLAIFDFFTWLGYLNSLINPIIYTMSNEDFKQAFHKLIRFKCAS</sequence>
<keyword id="KW-0085">Behavior</keyword>
<keyword id="KW-1003">Cell membrane</keyword>
<keyword id="KW-1015">Disulfide bond</keyword>
<keyword id="KW-0297">G-protein coupled receptor</keyword>
<keyword id="KW-0325">Glycoprotein</keyword>
<keyword id="KW-0449">Lipoprotein</keyword>
<keyword id="KW-0472">Membrane</keyword>
<keyword id="KW-0564">Palmitate</keyword>
<keyword id="KW-0597">Phosphoprotein</keyword>
<keyword id="KW-0675">Receptor</keyword>
<keyword id="KW-1185">Reference proteome</keyword>
<keyword id="KW-0807">Transducer</keyword>
<keyword id="KW-0812">Transmembrane</keyword>
<keyword id="KW-1133">Transmembrane helix</keyword>
<reference key="1">
    <citation type="journal article" date="2004" name="J. Hered.">
        <title>A marker set for construction of a genetic map of the silver fox (Vulpes vulpes).</title>
        <authorList>
            <person name="Kukekova A.V."/>
            <person name="Trut L.N."/>
            <person name="Oskina I.N."/>
            <person name="Kharlamova A.V."/>
            <person name="Shikhevich S.G."/>
            <person name="Kirkness E.F."/>
            <person name="Aguirre G.D."/>
            <person name="Acland G.M."/>
        </authorList>
    </citation>
    <scope>NUCLEOTIDE SEQUENCE [GENOMIC DNA]</scope>
    <source>
        <strain>Silver</strain>
    </source>
</reference>
<proteinExistence type="inferred from homology"/>
<name>5HT1B_VULVU</name>
<protein>
    <recommendedName>
        <fullName>5-hydroxytryptamine receptor 1B</fullName>
        <shortName>5-HT-1B</shortName>
        <shortName>5-HT1B</shortName>
        <shortName>5-HTR1B</shortName>
    </recommendedName>
    <alternativeName>
        <fullName>Serotonin receptor 1B</fullName>
    </alternativeName>
</protein>
<accession>Q6XXX8</accession>
<gene>
    <name type="primary">HTR1B</name>
</gene>
<evidence type="ECO:0000250" key="1">
    <source>
        <dbReference type="UniProtKB" id="P28222"/>
    </source>
</evidence>
<evidence type="ECO:0000250" key="2">
    <source>
        <dbReference type="UniProtKB" id="P41595"/>
    </source>
</evidence>
<evidence type="ECO:0000255" key="3"/>
<evidence type="ECO:0000255" key="4">
    <source>
        <dbReference type="PROSITE-ProRule" id="PRU00521"/>
    </source>
</evidence>
<evidence type="ECO:0000256" key="5">
    <source>
        <dbReference type="SAM" id="MobiDB-lite"/>
    </source>
</evidence>
<comment type="function">
    <text evidence="1">G-protein coupled receptor for 5-hydroxytryptamine (serotonin). Also functions as a receptor for ergot alkaloid derivatives, various anxiolytic and antidepressant drugs and other psychoactive substances, such as lysergic acid diethylamide (LSD). Ligand binding causes a conformation change that triggers signaling via guanine nucleotide-binding proteins (G proteins) and modulates the activity of downstream effectors, such as adenylate cyclase. HTR1B is coupled to G(i)/G(o) G alpha proteins and mediates inhibitory neurotransmission by inhibiting adenylate cyclase activity. Arrestin family members inhibit signaling via G proteins and mediate activation of alternative signaling pathways. Regulates the release of 5-hydroxytryptamine, dopamine and acetylcholine in the brain, and thereby affects neural activity, nociceptive processing, pain perception, mood and behavior. Besides, plays a role in vasoconstriction of cerebral arteries.</text>
</comment>
<comment type="subunit">
    <text evidence="1">Homodimer. Heterodimer with HTR1D.</text>
</comment>
<comment type="subcellular location">
    <subcellularLocation>
        <location evidence="1">Cell membrane</location>
        <topology evidence="1">Multi-pass membrane protein</topology>
    </subcellularLocation>
</comment>
<comment type="domain">
    <text evidence="1">Ligands are bound in a hydrophobic pocket formed by the transmembrane helices.</text>
</comment>
<comment type="domain">
    <text evidence="1">A residue in the 7th transmembrane region ('Thr-355' in human, 'Asn-351' in mouse and rat) is important for species-specific sensitivity to various agonists.</text>
</comment>
<comment type="PTM">
    <text evidence="1">Phosphorylated. Desensitization of the receptor may be mediated by its phosphorylation.</text>
</comment>
<comment type="PTM">
    <text evidence="1">Palmitoylated.</text>
</comment>
<comment type="similarity">
    <text evidence="4">Belongs to the G-protein coupled receptor 1 family.</text>
</comment>
<feature type="chain" id="PRO_0000068923" description="5-hydroxytryptamine receptor 1B">
    <location>
        <begin position="1"/>
        <end position="389"/>
    </location>
</feature>
<feature type="topological domain" description="Extracellular" evidence="1">
    <location>
        <begin position="1"/>
        <end position="45"/>
    </location>
</feature>
<feature type="transmembrane region" description="Helical; Name=1" evidence="1">
    <location>
        <begin position="46"/>
        <end position="71"/>
    </location>
</feature>
<feature type="topological domain" description="Cytoplasmic" evidence="1">
    <location>
        <begin position="72"/>
        <end position="85"/>
    </location>
</feature>
<feature type="transmembrane region" description="Helical; Name=2" evidence="1">
    <location>
        <begin position="86"/>
        <end position="110"/>
    </location>
</feature>
<feature type="topological domain" description="Extracellular" evidence="1">
    <location>
        <begin position="111"/>
        <end position="118"/>
    </location>
</feature>
<feature type="transmembrane region" description="Helical; Name=3" evidence="1">
    <location>
        <begin position="119"/>
        <end position="144"/>
    </location>
</feature>
<feature type="topological domain" description="Cytoplasmic" evidence="1">
    <location>
        <begin position="145"/>
        <end position="164"/>
    </location>
</feature>
<feature type="transmembrane region" description="Helical; Name=4" evidence="1">
    <location>
        <begin position="165"/>
        <end position="183"/>
    </location>
</feature>
<feature type="topological domain" description="Extracellular" evidence="1">
    <location>
        <begin position="184"/>
        <end position="204"/>
    </location>
</feature>
<feature type="transmembrane region" description="Helical; Name=5" evidence="1">
    <location>
        <begin position="205"/>
        <end position="228"/>
    </location>
</feature>
<feature type="topological domain" description="Cytoplasmic" evidence="1">
    <location>
        <begin position="229"/>
        <end position="314"/>
    </location>
</feature>
<feature type="transmembrane region" description="Helical; Name=6" evidence="1">
    <location>
        <begin position="315"/>
        <end position="336"/>
    </location>
</feature>
<feature type="topological domain" description="Extracellular" evidence="1">
    <location>
        <begin position="337"/>
        <end position="346"/>
    </location>
</feature>
<feature type="transmembrane region" description="Helical; Name=7" evidence="1">
    <location>
        <begin position="347"/>
        <end position="369"/>
    </location>
</feature>
<feature type="topological domain" description="Cytoplasmic" evidence="1">
    <location>
        <begin position="370"/>
        <end position="389"/>
    </location>
</feature>
<feature type="region of interest" description="Disordered" evidence="5">
    <location>
        <begin position="1"/>
        <end position="27"/>
    </location>
</feature>
<feature type="region of interest" description="Disordered" evidence="5">
    <location>
        <begin position="258"/>
        <end position="281"/>
    </location>
</feature>
<feature type="short sequence motif" description="DRY motif; important for ligand-induced conformation changes and signaling" evidence="2">
    <location>
        <begin position="145"/>
        <end position="147"/>
    </location>
</feature>
<feature type="short sequence motif" description="NPxxY motif; important for ligand-induced conformation changes and signaling" evidence="2">
    <location>
        <begin position="364"/>
        <end position="368"/>
    </location>
</feature>
<feature type="compositionally biased region" description="Polar residues" evidence="5">
    <location>
        <begin position="15"/>
        <end position="27"/>
    </location>
</feature>
<feature type="compositionally biased region" description="Polar residues" evidence="5">
    <location>
        <begin position="258"/>
        <end position="271"/>
    </location>
</feature>
<feature type="binding site" evidence="1">
    <location>
        <position position="128"/>
    </location>
    <ligand>
        <name>ergotamine</name>
        <dbReference type="ChEBI" id="CHEBI:190463"/>
        <note>agonist</note>
    </ligand>
</feature>
<feature type="binding site" evidence="1">
    <location>
        <position position="133"/>
    </location>
    <ligand>
        <name>ergotamine</name>
        <dbReference type="ChEBI" id="CHEBI:190463"/>
        <note>agonist</note>
    </ligand>
</feature>
<feature type="binding site" evidence="1">
    <location>
        <position position="200"/>
    </location>
    <ligand>
        <name>ergotamine</name>
        <dbReference type="ChEBI" id="CHEBI:190463"/>
        <note>agonist</note>
    </ligand>
</feature>
<feature type="site" description="Important for species-specific agonist sensitivity" evidence="1">
    <location>
        <position position="354"/>
    </location>
</feature>
<feature type="lipid moiety-binding region" description="S-palmitoyl cysteine" evidence="3">
    <location>
        <position position="387"/>
    </location>
</feature>
<feature type="glycosylation site" description="N-linked (GlcNAc...) asparagine" evidence="3">
    <location>
        <position position="24"/>
    </location>
</feature>
<feature type="glycosylation site" description="N-linked (GlcNAc...) asparagine" evidence="3">
    <location>
        <position position="31"/>
    </location>
</feature>
<feature type="disulfide bond" evidence="4">
    <location>
        <begin position="121"/>
        <end position="198"/>
    </location>
</feature>
<dbReference type="EMBL" id="AY204571">
    <property type="protein sequence ID" value="AAP12468.1"/>
    <property type="molecule type" value="Genomic_DNA"/>
</dbReference>
<dbReference type="RefSeq" id="XP_025863175.1">
    <property type="nucleotide sequence ID" value="XM_026007390.1"/>
</dbReference>
<dbReference type="SMR" id="Q6XXX8"/>
<dbReference type="STRING" id="9627.ENSVVUP00000021817"/>
<dbReference type="GlyCosmos" id="Q6XXX8">
    <property type="glycosylation" value="2 sites, No reported glycans"/>
</dbReference>
<dbReference type="Ensembl" id="ENSVVUT00000028940">
    <property type="protein sequence ID" value="ENSVVUP00000021817"/>
    <property type="gene ID" value="ENSVVUG00000016034"/>
</dbReference>
<dbReference type="GeneID" id="112926373"/>
<dbReference type="OMA" id="RFRCCRA"/>
<dbReference type="Proteomes" id="UP000286640">
    <property type="component" value="Unplaced"/>
</dbReference>
<dbReference type="GO" id="GO:0005783">
    <property type="term" value="C:endoplasmic reticulum"/>
    <property type="evidence" value="ECO:0007669"/>
    <property type="project" value="Ensembl"/>
</dbReference>
<dbReference type="GO" id="GO:0098666">
    <property type="term" value="C:G protein-coupled serotonin receptor complex"/>
    <property type="evidence" value="ECO:0007669"/>
    <property type="project" value="Ensembl"/>
</dbReference>
<dbReference type="GO" id="GO:0005886">
    <property type="term" value="C:plasma membrane"/>
    <property type="evidence" value="ECO:0000250"/>
    <property type="project" value="UniProtKB"/>
</dbReference>
<dbReference type="GO" id="GO:0042734">
    <property type="term" value="C:presynaptic membrane"/>
    <property type="evidence" value="ECO:0007669"/>
    <property type="project" value="Ensembl"/>
</dbReference>
<dbReference type="GO" id="GO:0099154">
    <property type="term" value="C:serotonergic synapse"/>
    <property type="evidence" value="ECO:0007669"/>
    <property type="project" value="Ensembl"/>
</dbReference>
<dbReference type="GO" id="GO:0004993">
    <property type="term" value="F:G protein-coupled serotonin receptor activity"/>
    <property type="evidence" value="ECO:0000250"/>
    <property type="project" value="UniProtKB"/>
</dbReference>
<dbReference type="GO" id="GO:0001586">
    <property type="term" value="F:Gi/o-coupled serotonin receptor activity"/>
    <property type="evidence" value="ECO:0007669"/>
    <property type="project" value="Ensembl"/>
</dbReference>
<dbReference type="GO" id="GO:0051378">
    <property type="term" value="F:serotonin binding"/>
    <property type="evidence" value="ECO:0007669"/>
    <property type="project" value="Ensembl"/>
</dbReference>
<dbReference type="GO" id="GO:0099589">
    <property type="term" value="F:serotonin receptor activity"/>
    <property type="evidence" value="ECO:0007669"/>
    <property type="project" value="Ensembl"/>
</dbReference>
<dbReference type="GO" id="GO:0071880">
    <property type="term" value="P:adenylate cyclase-activating adrenergic receptor signaling pathway"/>
    <property type="evidence" value="ECO:0007669"/>
    <property type="project" value="TreeGrafter"/>
</dbReference>
<dbReference type="GO" id="GO:0007198">
    <property type="term" value="P:adenylate cyclase-inhibiting serotonin receptor signaling pathway"/>
    <property type="evidence" value="ECO:0000250"/>
    <property type="project" value="UniProtKB"/>
</dbReference>
<dbReference type="GO" id="GO:0046849">
    <property type="term" value="P:bone remodeling"/>
    <property type="evidence" value="ECO:0007669"/>
    <property type="project" value="Ensembl"/>
</dbReference>
<dbReference type="GO" id="GO:0071312">
    <property type="term" value="P:cellular response to alkaloid"/>
    <property type="evidence" value="ECO:0000250"/>
    <property type="project" value="UniProtKB"/>
</dbReference>
<dbReference type="GO" id="GO:0071466">
    <property type="term" value="P:cellular response to xenobiotic stimulus"/>
    <property type="evidence" value="ECO:0000250"/>
    <property type="project" value="UniProtKB"/>
</dbReference>
<dbReference type="GO" id="GO:0007268">
    <property type="term" value="P:chemical synaptic transmission"/>
    <property type="evidence" value="ECO:0007669"/>
    <property type="project" value="InterPro"/>
</dbReference>
<dbReference type="GO" id="GO:0014063">
    <property type="term" value="P:negative regulation of serotonin secretion"/>
    <property type="evidence" value="ECO:0000250"/>
    <property type="project" value="UniProtKB"/>
</dbReference>
<dbReference type="GO" id="GO:0007208">
    <property type="term" value="P:phospholipase C-activating serotonin receptor signaling pathway"/>
    <property type="evidence" value="ECO:0007669"/>
    <property type="project" value="Ensembl"/>
</dbReference>
<dbReference type="GO" id="GO:0043410">
    <property type="term" value="P:positive regulation of MAPK cascade"/>
    <property type="evidence" value="ECO:0007669"/>
    <property type="project" value="TreeGrafter"/>
</dbReference>
<dbReference type="GO" id="GO:1904707">
    <property type="term" value="P:positive regulation of vascular associated smooth muscle cell proliferation"/>
    <property type="evidence" value="ECO:0007669"/>
    <property type="project" value="Ensembl"/>
</dbReference>
<dbReference type="GO" id="GO:0050795">
    <property type="term" value="P:regulation of behavior"/>
    <property type="evidence" value="ECO:0007669"/>
    <property type="project" value="InterPro"/>
</dbReference>
<dbReference type="GO" id="GO:0042310">
    <property type="term" value="P:vasoconstriction"/>
    <property type="evidence" value="ECO:0007669"/>
    <property type="project" value="InterPro"/>
</dbReference>
<dbReference type="CDD" id="cd15333">
    <property type="entry name" value="7tmA_5-HT1B_1D"/>
    <property type="match status" value="1"/>
</dbReference>
<dbReference type="Gene3D" id="1.20.1070.10">
    <property type="entry name" value="Rhodopsin 7-helix transmembrane proteins"/>
    <property type="match status" value="1"/>
</dbReference>
<dbReference type="InterPro" id="IPR002147">
    <property type="entry name" value="5HT1B_rcpt"/>
</dbReference>
<dbReference type="InterPro" id="IPR002231">
    <property type="entry name" value="5HT_rcpt"/>
</dbReference>
<dbReference type="InterPro" id="IPR000276">
    <property type="entry name" value="GPCR_Rhodpsn"/>
</dbReference>
<dbReference type="InterPro" id="IPR017452">
    <property type="entry name" value="GPCR_Rhodpsn_7TM"/>
</dbReference>
<dbReference type="PANTHER" id="PTHR24248:SF201">
    <property type="entry name" value="5-HYDROXYTRYPTAMINE RECEPTOR 1B"/>
    <property type="match status" value="1"/>
</dbReference>
<dbReference type="PANTHER" id="PTHR24248">
    <property type="entry name" value="ADRENERGIC RECEPTOR-RELATED G-PROTEIN COUPLED RECEPTOR"/>
    <property type="match status" value="1"/>
</dbReference>
<dbReference type="Pfam" id="PF00001">
    <property type="entry name" value="7tm_1"/>
    <property type="match status" value="1"/>
</dbReference>
<dbReference type="PRINTS" id="PR00513">
    <property type="entry name" value="5HT1BRECEPTR"/>
</dbReference>
<dbReference type="PRINTS" id="PR01101">
    <property type="entry name" value="5HTRECEPTOR"/>
</dbReference>
<dbReference type="PRINTS" id="PR00237">
    <property type="entry name" value="GPCRRHODOPSN"/>
</dbReference>
<dbReference type="SMART" id="SM01381">
    <property type="entry name" value="7TM_GPCR_Srsx"/>
    <property type="match status" value="1"/>
</dbReference>
<dbReference type="SUPFAM" id="SSF81321">
    <property type="entry name" value="Family A G protein-coupled receptor-like"/>
    <property type="match status" value="1"/>
</dbReference>
<dbReference type="PROSITE" id="PS00237">
    <property type="entry name" value="G_PROTEIN_RECEP_F1_1"/>
    <property type="match status" value="1"/>
</dbReference>
<dbReference type="PROSITE" id="PS50262">
    <property type="entry name" value="G_PROTEIN_RECEP_F1_2"/>
    <property type="match status" value="1"/>
</dbReference>